<gene>
    <name type="primary">PALA</name>
</gene>
<keyword id="KW-0963">Cytoplasm</keyword>
<keyword id="KW-0456">Lyase</keyword>
<keyword id="KW-0585">Phenylalanine catabolism</keyword>
<keyword id="KW-0587">Phenylpropanoid metabolism</keyword>
<keyword id="KW-1185">Reference proteome</keyword>
<organism>
    <name type="scientific">Nicotiana tabacum</name>
    <name type="common">Common tobacco</name>
    <dbReference type="NCBI Taxonomy" id="4097"/>
    <lineage>
        <taxon>Eukaryota</taxon>
        <taxon>Viridiplantae</taxon>
        <taxon>Streptophyta</taxon>
        <taxon>Embryophyta</taxon>
        <taxon>Tracheophyta</taxon>
        <taxon>Spermatophyta</taxon>
        <taxon>Magnoliopsida</taxon>
        <taxon>eudicotyledons</taxon>
        <taxon>Gunneridae</taxon>
        <taxon>Pentapetalae</taxon>
        <taxon>asterids</taxon>
        <taxon>lamiids</taxon>
        <taxon>Solanales</taxon>
        <taxon>Solanaceae</taxon>
        <taxon>Nicotianoideae</taxon>
        <taxon>Nicotianeae</taxon>
        <taxon>Nicotiana</taxon>
    </lineage>
</organism>
<protein>
    <recommendedName>
        <fullName>Phenylalanine ammonia-lyase</fullName>
        <ecNumber evidence="2">4.3.1.24</ecNumber>
    </recommendedName>
</protein>
<dbReference type="EC" id="4.3.1.24" evidence="2"/>
<dbReference type="EMBL" id="D17467">
    <property type="protein sequence ID" value="BAA22963.1"/>
    <property type="molecule type" value="mRNA"/>
</dbReference>
<dbReference type="EMBL" id="AB008199">
    <property type="protein sequence ID" value="BAA22947.1"/>
    <property type="molecule type" value="Genomic_DNA"/>
</dbReference>
<dbReference type="PIR" id="T01858">
    <property type="entry name" value="T01858"/>
</dbReference>
<dbReference type="RefSeq" id="NP_001312352.1">
    <property type="nucleotide sequence ID" value="NM_001325423.1"/>
</dbReference>
<dbReference type="SMR" id="P35513"/>
<dbReference type="STRING" id="4097.P35513"/>
<dbReference type="PaxDb" id="4097-P35513"/>
<dbReference type="GeneID" id="107786762"/>
<dbReference type="KEGG" id="nta:107786762"/>
<dbReference type="OrthoDB" id="10051290at2759"/>
<dbReference type="BRENDA" id="4.3.1.24">
    <property type="organism ID" value="3645"/>
</dbReference>
<dbReference type="SABIO-RK" id="P35513"/>
<dbReference type="UniPathway" id="UPA00713">
    <property type="reaction ID" value="UER00725"/>
</dbReference>
<dbReference type="Proteomes" id="UP000084051">
    <property type="component" value="Unplaced"/>
</dbReference>
<dbReference type="GO" id="GO:0005737">
    <property type="term" value="C:cytoplasm"/>
    <property type="evidence" value="ECO:0007669"/>
    <property type="project" value="UniProtKB-SubCell"/>
</dbReference>
<dbReference type="GO" id="GO:0016841">
    <property type="term" value="F:ammonia-lyase activity"/>
    <property type="evidence" value="ECO:0000318"/>
    <property type="project" value="GO_Central"/>
</dbReference>
<dbReference type="GO" id="GO:0045548">
    <property type="term" value="F:phenylalanine ammonia-lyase activity"/>
    <property type="evidence" value="ECO:0007669"/>
    <property type="project" value="UniProtKB-EC"/>
</dbReference>
<dbReference type="GO" id="GO:0009800">
    <property type="term" value="P:cinnamic acid biosynthetic process"/>
    <property type="evidence" value="ECO:0007669"/>
    <property type="project" value="UniProtKB-UniPathway"/>
</dbReference>
<dbReference type="GO" id="GO:0006559">
    <property type="term" value="P:L-phenylalanine catabolic process"/>
    <property type="evidence" value="ECO:0007669"/>
    <property type="project" value="UniProtKB-KW"/>
</dbReference>
<dbReference type="CDD" id="cd00332">
    <property type="entry name" value="PAL-HAL"/>
    <property type="match status" value="1"/>
</dbReference>
<dbReference type="FunFam" id="1.10.274.20:FF:000001">
    <property type="entry name" value="Phenylalanine ammonia-lyase"/>
    <property type="match status" value="1"/>
</dbReference>
<dbReference type="FunFam" id="1.10.275.10:FF:000009">
    <property type="entry name" value="Phenylalanine ammonia-lyase"/>
    <property type="match status" value="1"/>
</dbReference>
<dbReference type="FunFam" id="1.20.200.10:FF:000009">
    <property type="entry name" value="Phenylalanine ammonia-lyase"/>
    <property type="match status" value="1"/>
</dbReference>
<dbReference type="Gene3D" id="1.20.200.10">
    <property type="entry name" value="Fumarase/aspartase (Central domain)"/>
    <property type="match status" value="1"/>
</dbReference>
<dbReference type="Gene3D" id="1.10.275.10">
    <property type="entry name" value="Fumarase/aspartase (N-terminal domain)"/>
    <property type="match status" value="1"/>
</dbReference>
<dbReference type="Gene3D" id="1.10.274.20">
    <property type="entry name" value="Phenylalanine ammonia-lyase 1, domain 3"/>
    <property type="match status" value="1"/>
</dbReference>
<dbReference type="InterPro" id="IPR001106">
    <property type="entry name" value="Aromatic_Lyase"/>
</dbReference>
<dbReference type="InterPro" id="IPR024083">
    <property type="entry name" value="Fumarase/histidase_N"/>
</dbReference>
<dbReference type="InterPro" id="IPR008948">
    <property type="entry name" value="L-Aspartase-like"/>
</dbReference>
<dbReference type="InterPro" id="IPR022313">
    <property type="entry name" value="Phe/His_NH3-lyase_AS"/>
</dbReference>
<dbReference type="InterPro" id="IPR005922">
    <property type="entry name" value="Phe_NH3-lyase"/>
</dbReference>
<dbReference type="InterPro" id="IPR023144">
    <property type="entry name" value="Phe_NH3-lyase_shielding_dom_sf"/>
</dbReference>
<dbReference type="NCBIfam" id="TIGR01226">
    <property type="entry name" value="phe_am_lyase"/>
    <property type="match status" value="1"/>
</dbReference>
<dbReference type="PANTHER" id="PTHR10362">
    <property type="entry name" value="HISTIDINE AMMONIA-LYASE"/>
    <property type="match status" value="1"/>
</dbReference>
<dbReference type="Pfam" id="PF00221">
    <property type="entry name" value="Lyase_aromatic"/>
    <property type="match status" value="1"/>
</dbReference>
<dbReference type="SUPFAM" id="SSF48557">
    <property type="entry name" value="L-aspartase-like"/>
    <property type="match status" value="1"/>
</dbReference>
<dbReference type="PROSITE" id="PS00488">
    <property type="entry name" value="PAL_HISTIDASE"/>
    <property type="match status" value="1"/>
</dbReference>
<reference key="1">
    <citation type="journal article" date="1994" name="Plant Physiol.">
        <title>Cloning and sequencing of a full-length cDNA coding for phenylalanine ammonia-lyase from tobacco cell culture.</title>
        <authorList>
            <person name="Nagai N."/>
            <person name="Kitauchi H."/>
            <person name="Shimosaka M."/>
            <person name="Okazaki M."/>
        </authorList>
    </citation>
    <scope>NUCLEOTIDE SEQUENCE [MRNA]</scope>
</reference>
<reference key="2">
    <citation type="submission" date="1997-10" db="EMBL/GenBank/DDBJ databases">
        <authorList>
            <person name="Nagai N."/>
            <person name="Kitauchi H."/>
            <person name="Shimosaka M."/>
            <person name="Okazaki M."/>
        </authorList>
    </citation>
    <scope>SEQUENCE REVISION</scope>
</reference>
<reference key="3">
    <citation type="submission" date="1997-10" db="EMBL/GenBank/DDBJ databases">
        <authorList>
            <person name="Taguchi G."/>
            <person name="Sharan M."/>
            <person name="Gonda K."/>
            <person name="Yanagisawa K."/>
            <person name="Shimosaka M."/>
            <person name="Hayashida N."/>
            <person name="Okazaki M."/>
        </authorList>
    </citation>
    <scope>NUCLEOTIDE SEQUENCE [GENOMIC DNA]</scope>
    <source>
        <strain>cv. Bright Yellow</strain>
        <tissue>Callus</tissue>
    </source>
</reference>
<sequence length="712" mass="77345">MAGVAQNGHQEMDFCMKVDPLNWEMAADSLKGSHLDEVKKMVAEFRKPVVKLGGETLTVAQVAAIAAKDNVKTVKVELSEGARAGVKASSDWVMDSMGKGTDSYGVTTGFGATSHRRTKNGGALQKELIRFLNAGVFGNGTESCHTLPQSGTRAAMLVRINTLLQGYSGIRFEILEAITKLLNHNVTPCLPLRGTITASGDLVPLSYIAGLLTGRPNSKAVGPNGETLNAEEAFRVAGVNGGFFELQPKEGLALVNGTAVGSGLASMVLFDANVLAVFSEVLSAIFAEVMNGKPEFTDHLTHKLKHHPGQIEAAAIMEHILDGSSYVKAAQKLHETDPLQKPKQDRYALRTSPQWLGPQIEVIRSATKMIEREINSVNDNPLIDVSRNKALHGGNFQGTPIGVSMDNARLALASIGKLMFGQFSELVNDYYNNGLPSNLTAGRNPSLDYGFKGSEIAMASYCSELQFLANPVTNHVQSAEQHNQDVNSLDLISARKTAEAVDILKLMSSTYLVALCQAIDLRHLEENLRNAVKNTVSQVAKRTLTMGTNGELHPSRFCEKDLLRVVDREYVFAYADDACSANYPLMQKLRQVLVDHALQNGENEKNANSSIFQKILAFEDELKAVLPKEVESARAALESGNPAIANRIKECRSYPLYRFVRGELGAELLTGEKVRSPGEECDKVFTAMCNGQIIDSLLECLKEWNGAPLPIC</sequence>
<accession>P35513</accession>
<accession>O22114</accession>
<evidence type="ECO:0000250" key="1">
    <source>
        <dbReference type="UniProtKB" id="P11544"/>
    </source>
</evidence>
<evidence type="ECO:0000250" key="2">
    <source>
        <dbReference type="UniProtKB" id="P24481"/>
    </source>
</evidence>
<evidence type="ECO:0000250" key="3">
    <source>
        <dbReference type="UniProtKB" id="Q68G84"/>
    </source>
</evidence>
<evidence type="ECO:0000255" key="4">
    <source>
        <dbReference type="PROSITE-ProRule" id="PRU10122"/>
    </source>
</evidence>
<evidence type="ECO:0000305" key="5"/>
<proteinExistence type="evidence at transcript level"/>
<feature type="chain" id="PRO_0000215424" description="Phenylalanine ammonia-lyase">
    <location>
        <begin position="1"/>
        <end position="712"/>
    </location>
</feature>
<feature type="active site" description="Proton donor/acceptor" evidence="3">
    <location>
        <position position="104"/>
    </location>
</feature>
<feature type="binding site" evidence="3">
    <location>
        <position position="256"/>
    </location>
    <ligand>
        <name>(E)-cinnamate</name>
        <dbReference type="ChEBI" id="CHEBI:15669"/>
    </ligand>
</feature>
<feature type="binding site" evidence="3">
    <location>
        <position position="344"/>
    </location>
    <ligand>
        <name>(E)-cinnamate</name>
        <dbReference type="ChEBI" id="CHEBI:15669"/>
    </ligand>
</feature>
<feature type="binding site" evidence="3">
    <location>
        <position position="350"/>
    </location>
    <ligand>
        <name>(E)-cinnamate</name>
        <dbReference type="ChEBI" id="CHEBI:15669"/>
    </ligand>
</feature>
<feature type="binding site" evidence="3">
    <location>
        <position position="380"/>
    </location>
    <ligand>
        <name>(E)-cinnamate</name>
        <dbReference type="ChEBI" id="CHEBI:15669"/>
    </ligand>
</feature>
<feature type="binding site" evidence="1">
    <location>
        <position position="452"/>
    </location>
    <ligand>
        <name>(E)-cinnamate</name>
        <dbReference type="ChEBI" id="CHEBI:15669"/>
    </ligand>
</feature>
<feature type="binding site" evidence="1">
    <location>
        <position position="480"/>
    </location>
    <ligand>
        <name>(E)-cinnamate</name>
        <dbReference type="ChEBI" id="CHEBI:15669"/>
    </ligand>
</feature>
<feature type="binding site" evidence="3">
    <location>
        <position position="483"/>
    </location>
    <ligand>
        <name>(E)-cinnamate</name>
        <dbReference type="ChEBI" id="CHEBI:15669"/>
    </ligand>
</feature>
<feature type="modified residue" description="2,3-didehydroalanine (Ser)" evidence="4">
    <location>
        <position position="199"/>
    </location>
</feature>
<feature type="cross-link" description="5-imidazolinone (Ala-Gly)" evidence="3">
    <location>
        <begin position="198"/>
        <end position="200"/>
    </location>
</feature>
<name>PAL2_TOBAC</name>
<comment type="function">
    <text evidence="2">This is a key enzyme of plant metabolism catalyzing the first reaction in the biosynthesis from L-phenylalanine of a wide variety of natural products based on the phenylpropane skeleton.</text>
</comment>
<comment type="catalytic activity">
    <reaction evidence="2">
        <text>L-phenylalanine = (E)-cinnamate + NH4(+)</text>
        <dbReference type="Rhea" id="RHEA:21384"/>
        <dbReference type="ChEBI" id="CHEBI:15669"/>
        <dbReference type="ChEBI" id="CHEBI:28938"/>
        <dbReference type="ChEBI" id="CHEBI:58095"/>
        <dbReference type="EC" id="4.3.1.24"/>
    </reaction>
</comment>
<comment type="pathway">
    <text evidence="5">Phenylpropanoid metabolism; trans-cinnamate biosynthesis; trans-cinnamate from L-phenylalanine: step 1/1.</text>
</comment>
<comment type="subunit">
    <text evidence="2">Homotetramer.</text>
</comment>
<comment type="subcellular location">
    <subcellularLocation>
        <location evidence="5">Cytoplasm</location>
    </subcellularLocation>
</comment>
<comment type="PTM">
    <text evidence="3">Contains an active site 4-methylidene-imidazol-5-one (MIO), which is formed autocatalytically by cyclization and dehydration of residues Ala-Ser-Gly.</text>
</comment>
<comment type="similarity">
    <text evidence="5">Belongs to the PAL/histidase family.</text>
</comment>